<name>Y1070_METJA</name>
<dbReference type="EMBL" id="L77117">
    <property type="protein sequence ID" value="AAB99077.1"/>
    <property type="molecule type" value="Genomic_DNA"/>
</dbReference>
<dbReference type="PIR" id="E64433">
    <property type="entry name" value="E64433"/>
</dbReference>
<dbReference type="RefSeq" id="WP_010870582.1">
    <property type="nucleotide sequence ID" value="NC_000909.1"/>
</dbReference>
<dbReference type="SMR" id="Q58470"/>
<dbReference type="STRING" id="243232.MJ_1070"/>
<dbReference type="PaxDb" id="243232-MJ_1070"/>
<dbReference type="EnsemblBacteria" id="AAB99077">
    <property type="protein sequence ID" value="AAB99077"/>
    <property type="gene ID" value="MJ_1070"/>
</dbReference>
<dbReference type="GeneID" id="1451966"/>
<dbReference type="KEGG" id="mja:MJ_1070"/>
<dbReference type="eggNOG" id="arCOG05067">
    <property type="taxonomic scope" value="Archaea"/>
</dbReference>
<dbReference type="HOGENOM" id="CLU_135436_0_0_2"/>
<dbReference type="InParanoid" id="Q58470"/>
<dbReference type="OrthoDB" id="65659at2157"/>
<dbReference type="Proteomes" id="UP000000805">
    <property type="component" value="Chromosome"/>
</dbReference>
<dbReference type="Gene3D" id="2.60.120.260">
    <property type="entry name" value="Galactose-binding domain-like"/>
    <property type="match status" value="1"/>
</dbReference>
<sequence>MRKYLIILVLLLFLSSSFGYYFDYIKVSESNPIKTITFKINKAENYSYKLSFVHYGNINKSMKVNIYLNGNLAYTIDDSNDASPAYKKNASIDITNYLKDGENVLKVEGMNLIGNENYHPYYVLKDIYINEPAKTPIDFKLMIYALLIICFLIYKKC</sequence>
<protein>
    <recommendedName>
        <fullName>Uncharacterized protein MJ1070</fullName>
    </recommendedName>
</protein>
<feature type="signal peptide" evidence="1">
    <location>
        <begin position="1"/>
        <end position="19"/>
    </location>
</feature>
<feature type="chain" id="PRO_0000014007" description="Uncharacterized protein MJ1070">
    <location>
        <begin position="20"/>
        <end position="157"/>
    </location>
</feature>
<reference key="1">
    <citation type="journal article" date="1996" name="Science">
        <title>Complete genome sequence of the methanogenic archaeon, Methanococcus jannaschii.</title>
        <authorList>
            <person name="Bult C.J."/>
            <person name="White O."/>
            <person name="Olsen G.J."/>
            <person name="Zhou L."/>
            <person name="Fleischmann R.D."/>
            <person name="Sutton G.G."/>
            <person name="Blake J.A."/>
            <person name="FitzGerald L.M."/>
            <person name="Clayton R.A."/>
            <person name="Gocayne J.D."/>
            <person name="Kerlavage A.R."/>
            <person name="Dougherty B.A."/>
            <person name="Tomb J.-F."/>
            <person name="Adams M.D."/>
            <person name="Reich C.I."/>
            <person name="Overbeek R."/>
            <person name="Kirkness E.F."/>
            <person name="Weinstock K.G."/>
            <person name="Merrick J.M."/>
            <person name="Glodek A."/>
            <person name="Scott J.L."/>
            <person name="Geoghagen N.S.M."/>
            <person name="Weidman J.F."/>
            <person name="Fuhrmann J.L."/>
            <person name="Nguyen D."/>
            <person name="Utterback T.R."/>
            <person name="Kelley J.M."/>
            <person name="Peterson J.D."/>
            <person name="Sadow P.W."/>
            <person name="Hanna M.C."/>
            <person name="Cotton M.D."/>
            <person name="Roberts K.M."/>
            <person name="Hurst M.A."/>
            <person name="Kaine B.P."/>
            <person name="Borodovsky M."/>
            <person name="Klenk H.-P."/>
            <person name="Fraser C.M."/>
            <person name="Smith H.O."/>
            <person name="Woese C.R."/>
            <person name="Venter J.C."/>
        </authorList>
    </citation>
    <scope>NUCLEOTIDE SEQUENCE [LARGE SCALE GENOMIC DNA]</scope>
    <source>
        <strain>ATCC 43067 / DSM 2661 / JAL-1 / JCM 10045 / NBRC 100440</strain>
    </source>
</reference>
<organism>
    <name type="scientific">Methanocaldococcus jannaschii (strain ATCC 43067 / DSM 2661 / JAL-1 / JCM 10045 / NBRC 100440)</name>
    <name type="common">Methanococcus jannaschii</name>
    <dbReference type="NCBI Taxonomy" id="243232"/>
    <lineage>
        <taxon>Archaea</taxon>
        <taxon>Methanobacteriati</taxon>
        <taxon>Methanobacteriota</taxon>
        <taxon>Methanomada group</taxon>
        <taxon>Methanococci</taxon>
        <taxon>Methanococcales</taxon>
        <taxon>Methanocaldococcaceae</taxon>
        <taxon>Methanocaldococcus</taxon>
    </lineage>
</organism>
<accession>Q58470</accession>
<gene>
    <name type="ordered locus">MJ1070</name>
</gene>
<keyword id="KW-1185">Reference proteome</keyword>
<keyword id="KW-0732">Signal</keyword>
<evidence type="ECO:0000255" key="1"/>
<proteinExistence type="inferred from homology"/>